<dbReference type="EC" id="4.1.1.49" evidence="1"/>
<dbReference type="EMBL" id="CU928163">
    <property type="protein sequence ID" value="CAR15008.1"/>
    <property type="molecule type" value="Genomic_DNA"/>
</dbReference>
<dbReference type="RefSeq" id="WP_001309803.1">
    <property type="nucleotide sequence ID" value="NC_011751.1"/>
</dbReference>
<dbReference type="RefSeq" id="YP_002414513.1">
    <property type="nucleotide sequence ID" value="NC_011751.1"/>
</dbReference>
<dbReference type="SMR" id="B7NE08"/>
<dbReference type="STRING" id="585056.ECUMN_3862"/>
<dbReference type="GeneID" id="86862199"/>
<dbReference type="KEGG" id="eum:ECUMN_3862"/>
<dbReference type="PATRIC" id="fig|585056.7.peg.4034"/>
<dbReference type="HOGENOM" id="CLU_018247_0_1_6"/>
<dbReference type="UniPathway" id="UPA00138"/>
<dbReference type="Proteomes" id="UP000007097">
    <property type="component" value="Chromosome"/>
</dbReference>
<dbReference type="GO" id="GO:0005829">
    <property type="term" value="C:cytosol"/>
    <property type="evidence" value="ECO:0007669"/>
    <property type="project" value="TreeGrafter"/>
</dbReference>
<dbReference type="GO" id="GO:0005524">
    <property type="term" value="F:ATP binding"/>
    <property type="evidence" value="ECO:0007669"/>
    <property type="project" value="UniProtKB-UniRule"/>
</dbReference>
<dbReference type="GO" id="GO:0046872">
    <property type="term" value="F:metal ion binding"/>
    <property type="evidence" value="ECO:0007669"/>
    <property type="project" value="UniProtKB-KW"/>
</dbReference>
<dbReference type="GO" id="GO:0004612">
    <property type="term" value="F:phosphoenolpyruvate carboxykinase (ATP) activity"/>
    <property type="evidence" value="ECO:0007669"/>
    <property type="project" value="UniProtKB-UniRule"/>
</dbReference>
<dbReference type="GO" id="GO:0006094">
    <property type="term" value="P:gluconeogenesis"/>
    <property type="evidence" value="ECO:0007669"/>
    <property type="project" value="UniProtKB-UniRule"/>
</dbReference>
<dbReference type="CDD" id="cd00484">
    <property type="entry name" value="PEPCK_ATP"/>
    <property type="match status" value="1"/>
</dbReference>
<dbReference type="FunFam" id="2.170.8.10:FF:000001">
    <property type="entry name" value="Phosphoenolpyruvate carboxykinase (ATP)"/>
    <property type="match status" value="1"/>
</dbReference>
<dbReference type="FunFam" id="3.40.449.10:FF:000001">
    <property type="entry name" value="Phosphoenolpyruvate carboxykinase (ATP)"/>
    <property type="match status" value="1"/>
</dbReference>
<dbReference type="Gene3D" id="3.90.228.20">
    <property type="match status" value="1"/>
</dbReference>
<dbReference type="Gene3D" id="3.40.449.10">
    <property type="entry name" value="Phosphoenolpyruvate Carboxykinase, domain 1"/>
    <property type="match status" value="1"/>
</dbReference>
<dbReference type="Gene3D" id="2.170.8.10">
    <property type="entry name" value="Phosphoenolpyruvate Carboxykinase, domain 2"/>
    <property type="match status" value="1"/>
</dbReference>
<dbReference type="HAMAP" id="MF_00453">
    <property type="entry name" value="PEPCK_ATP"/>
    <property type="match status" value="1"/>
</dbReference>
<dbReference type="InterPro" id="IPR001272">
    <property type="entry name" value="PEP_carboxykinase_ATP"/>
</dbReference>
<dbReference type="InterPro" id="IPR013035">
    <property type="entry name" value="PEP_carboxykinase_C"/>
</dbReference>
<dbReference type="InterPro" id="IPR008210">
    <property type="entry name" value="PEP_carboxykinase_N"/>
</dbReference>
<dbReference type="InterPro" id="IPR015994">
    <property type="entry name" value="PEPCK_ATP_CS"/>
</dbReference>
<dbReference type="NCBIfam" id="TIGR00224">
    <property type="entry name" value="pckA"/>
    <property type="match status" value="1"/>
</dbReference>
<dbReference type="NCBIfam" id="NF006819">
    <property type="entry name" value="PRK09344.1-1"/>
    <property type="match status" value="1"/>
</dbReference>
<dbReference type="NCBIfam" id="NF006820">
    <property type="entry name" value="PRK09344.1-2"/>
    <property type="match status" value="1"/>
</dbReference>
<dbReference type="NCBIfam" id="NF006821">
    <property type="entry name" value="PRK09344.1-3"/>
    <property type="match status" value="1"/>
</dbReference>
<dbReference type="PANTHER" id="PTHR30031:SF0">
    <property type="entry name" value="PHOSPHOENOLPYRUVATE CARBOXYKINASE (ATP)"/>
    <property type="match status" value="1"/>
</dbReference>
<dbReference type="PANTHER" id="PTHR30031">
    <property type="entry name" value="PHOSPHOENOLPYRUVATE CARBOXYKINASE ATP"/>
    <property type="match status" value="1"/>
</dbReference>
<dbReference type="Pfam" id="PF01293">
    <property type="entry name" value="PEPCK_ATP"/>
    <property type="match status" value="1"/>
</dbReference>
<dbReference type="PIRSF" id="PIRSF006294">
    <property type="entry name" value="PEP_crbxkin"/>
    <property type="match status" value="1"/>
</dbReference>
<dbReference type="SUPFAM" id="SSF68923">
    <property type="entry name" value="PEP carboxykinase N-terminal domain"/>
    <property type="match status" value="1"/>
</dbReference>
<dbReference type="SUPFAM" id="SSF53795">
    <property type="entry name" value="PEP carboxykinase-like"/>
    <property type="match status" value="1"/>
</dbReference>
<dbReference type="PROSITE" id="PS00532">
    <property type="entry name" value="PEPCK_ATP"/>
    <property type="match status" value="1"/>
</dbReference>
<proteinExistence type="inferred from homology"/>
<evidence type="ECO:0000255" key="1">
    <source>
        <dbReference type="HAMAP-Rule" id="MF_00453"/>
    </source>
</evidence>
<gene>
    <name evidence="1" type="primary">pckA</name>
    <name type="ordered locus">ECUMN_3862</name>
</gene>
<sequence>MRVNNGLTPQELEAYGISDVHDIVYNPSYDLLYQEELDPSLTGYERGVLTNLGAVAVDTGIFTGRSPKDKYIVRDDTTRDTFWWADKGKGKNDNKPLSPETWQHLKGLVTKQLSGKRLFVVDAFCGANPDTRLSVRFITEVAWQAHFVKNMFIRPSDEELAGFKPDFIVMNGAKCTNPQWKEQGLNSENFVAFNLTERMQLIGGTWYGGEMKKGMFSMMNYLLPLKGIASMHCSANVGEKGDVAVFFGLSGTGKTTLSTDPKRRLIGDDEHGWDDDGVFNFEGGCYAKTIKLSKEAEPEIYNAIRRDALLENVTVREDGTIDFDDGSKTENTRVSYPIYHIENIVKPVSKAGHATKVIFLTADAFGVLPPVSRLTADQTQYHFLSGFTAKLAGTERGITEPTPTFSACFGAAFLSLHPTQYAEVLVKRMQAAGAQAYLVNTGWNGTGKRISIKDTRAIIDAILNGSLDNAETFTLPMFNLAIPTELPGVDTKILDPRNTYASPEQWQEKAETLAKLFIDNFDKYTDTPAGAALVAAGPKL</sequence>
<comment type="function">
    <text evidence="1">Involved in the gluconeogenesis. Catalyzes the conversion of oxaloacetate (OAA) to phosphoenolpyruvate (PEP) through direct phosphoryl transfer between the nucleoside triphosphate and OAA.</text>
</comment>
<comment type="catalytic activity">
    <reaction evidence="1">
        <text>oxaloacetate + ATP = phosphoenolpyruvate + ADP + CO2</text>
        <dbReference type="Rhea" id="RHEA:18617"/>
        <dbReference type="ChEBI" id="CHEBI:16452"/>
        <dbReference type="ChEBI" id="CHEBI:16526"/>
        <dbReference type="ChEBI" id="CHEBI:30616"/>
        <dbReference type="ChEBI" id="CHEBI:58702"/>
        <dbReference type="ChEBI" id="CHEBI:456216"/>
        <dbReference type="EC" id="4.1.1.49"/>
    </reaction>
</comment>
<comment type="cofactor">
    <cofactor evidence="1">
        <name>Mn(2+)</name>
        <dbReference type="ChEBI" id="CHEBI:29035"/>
    </cofactor>
    <text evidence="1">Binds 1 Mn(2+) ion per subunit.</text>
</comment>
<comment type="pathway">
    <text evidence="1">Carbohydrate biosynthesis; gluconeogenesis.</text>
</comment>
<comment type="subunit">
    <text evidence="1">Monomer.</text>
</comment>
<comment type="subcellular location">
    <subcellularLocation>
        <location evidence="1">Cytoplasm</location>
    </subcellularLocation>
</comment>
<comment type="similarity">
    <text evidence="1">Belongs to the phosphoenolpyruvate carboxykinase (ATP) family.</text>
</comment>
<name>PCKA_ECOLU</name>
<keyword id="KW-0007">Acetylation</keyword>
<keyword id="KW-0067">ATP-binding</keyword>
<keyword id="KW-0963">Cytoplasm</keyword>
<keyword id="KW-0210">Decarboxylase</keyword>
<keyword id="KW-0312">Gluconeogenesis</keyword>
<keyword id="KW-0456">Lyase</keyword>
<keyword id="KW-0464">Manganese</keyword>
<keyword id="KW-0479">Metal-binding</keyword>
<keyword id="KW-0547">Nucleotide-binding</keyword>
<feature type="chain" id="PRO_1000125065" description="Phosphoenolpyruvate carboxykinase (ATP)">
    <location>
        <begin position="1"/>
        <end position="540"/>
    </location>
</feature>
<feature type="binding site" evidence="1">
    <location>
        <position position="65"/>
    </location>
    <ligand>
        <name>substrate</name>
    </ligand>
</feature>
<feature type="binding site" evidence="1">
    <location>
        <position position="207"/>
    </location>
    <ligand>
        <name>substrate</name>
    </ligand>
</feature>
<feature type="binding site" evidence="1">
    <location>
        <position position="213"/>
    </location>
    <ligand>
        <name>ATP</name>
        <dbReference type="ChEBI" id="CHEBI:30616"/>
    </ligand>
</feature>
<feature type="binding site" evidence="1">
    <location>
        <position position="213"/>
    </location>
    <ligand>
        <name>Mn(2+)</name>
        <dbReference type="ChEBI" id="CHEBI:29035"/>
    </ligand>
</feature>
<feature type="binding site" evidence="1">
    <location>
        <position position="213"/>
    </location>
    <ligand>
        <name>substrate</name>
    </ligand>
</feature>
<feature type="binding site" evidence="1">
    <location>
        <position position="232"/>
    </location>
    <ligand>
        <name>ATP</name>
        <dbReference type="ChEBI" id="CHEBI:30616"/>
    </ligand>
</feature>
<feature type="binding site" evidence="1">
    <location>
        <position position="232"/>
    </location>
    <ligand>
        <name>Mn(2+)</name>
        <dbReference type="ChEBI" id="CHEBI:29035"/>
    </ligand>
</feature>
<feature type="binding site" evidence="1">
    <location>
        <begin position="248"/>
        <end position="256"/>
    </location>
    <ligand>
        <name>ATP</name>
        <dbReference type="ChEBI" id="CHEBI:30616"/>
    </ligand>
</feature>
<feature type="binding site" evidence="1">
    <location>
        <position position="269"/>
    </location>
    <ligand>
        <name>Mn(2+)</name>
        <dbReference type="ChEBI" id="CHEBI:29035"/>
    </ligand>
</feature>
<feature type="binding site" evidence="1">
    <location>
        <position position="297"/>
    </location>
    <ligand>
        <name>ATP</name>
        <dbReference type="ChEBI" id="CHEBI:30616"/>
    </ligand>
</feature>
<feature type="binding site" evidence="1">
    <location>
        <position position="333"/>
    </location>
    <ligand>
        <name>ATP</name>
        <dbReference type="ChEBI" id="CHEBI:30616"/>
    </ligand>
</feature>
<feature type="binding site" evidence="1">
    <location>
        <position position="333"/>
    </location>
    <ligand>
        <name>substrate</name>
    </ligand>
</feature>
<feature type="binding site" evidence="1">
    <location>
        <begin position="449"/>
        <end position="450"/>
    </location>
    <ligand>
        <name>ATP</name>
        <dbReference type="ChEBI" id="CHEBI:30616"/>
    </ligand>
</feature>
<feature type="binding site" evidence="1">
    <location>
        <position position="455"/>
    </location>
    <ligand>
        <name>ATP</name>
        <dbReference type="ChEBI" id="CHEBI:30616"/>
    </ligand>
</feature>
<feature type="modified residue" description="N6-acetyllysine" evidence="1">
    <location>
        <position position="87"/>
    </location>
</feature>
<feature type="modified residue" description="N6-acetyllysine" evidence="1">
    <location>
        <position position="523"/>
    </location>
</feature>
<organism>
    <name type="scientific">Escherichia coli O17:K52:H18 (strain UMN026 / ExPEC)</name>
    <dbReference type="NCBI Taxonomy" id="585056"/>
    <lineage>
        <taxon>Bacteria</taxon>
        <taxon>Pseudomonadati</taxon>
        <taxon>Pseudomonadota</taxon>
        <taxon>Gammaproteobacteria</taxon>
        <taxon>Enterobacterales</taxon>
        <taxon>Enterobacteriaceae</taxon>
        <taxon>Escherichia</taxon>
    </lineage>
</organism>
<reference key="1">
    <citation type="journal article" date="2009" name="PLoS Genet.">
        <title>Organised genome dynamics in the Escherichia coli species results in highly diverse adaptive paths.</title>
        <authorList>
            <person name="Touchon M."/>
            <person name="Hoede C."/>
            <person name="Tenaillon O."/>
            <person name="Barbe V."/>
            <person name="Baeriswyl S."/>
            <person name="Bidet P."/>
            <person name="Bingen E."/>
            <person name="Bonacorsi S."/>
            <person name="Bouchier C."/>
            <person name="Bouvet O."/>
            <person name="Calteau A."/>
            <person name="Chiapello H."/>
            <person name="Clermont O."/>
            <person name="Cruveiller S."/>
            <person name="Danchin A."/>
            <person name="Diard M."/>
            <person name="Dossat C."/>
            <person name="Karoui M.E."/>
            <person name="Frapy E."/>
            <person name="Garry L."/>
            <person name="Ghigo J.M."/>
            <person name="Gilles A.M."/>
            <person name="Johnson J."/>
            <person name="Le Bouguenec C."/>
            <person name="Lescat M."/>
            <person name="Mangenot S."/>
            <person name="Martinez-Jehanne V."/>
            <person name="Matic I."/>
            <person name="Nassif X."/>
            <person name="Oztas S."/>
            <person name="Petit M.A."/>
            <person name="Pichon C."/>
            <person name="Rouy Z."/>
            <person name="Ruf C.S."/>
            <person name="Schneider D."/>
            <person name="Tourret J."/>
            <person name="Vacherie B."/>
            <person name="Vallenet D."/>
            <person name="Medigue C."/>
            <person name="Rocha E.P.C."/>
            <person name="Denamur E."/>
        </authorList>
    </citation>
    <scope>NUCLEOTIDE SEQUENCE [LARGE SCALE GENOMIC DNA]</scope>
    <source>
        <strain>UMN026 / ExPEC</strain>
    </source>
</reference>
<accession>B7NE08</accession>
<protein>
    <recommendedName>
        <fullName evidence="1">Phosphoenolpyruvate carboxykinase (ATP)</fullName>
        <shortName evidence="1">PCK</shortName>
        <shortName evidence="1">PEP carboxykinase</shortName>
        <shortName evidence="1">PEPCK</shortName>
        <ecNumber evidence="1">4.1.1.49</ecNumber>
    </recommendedName>
</protein>